<protein>
    <recommendedName>
        <fullName>Myosin light chain kinase, smooth muscle</fullName>
        <shortName>MLCK</shortName>
        <shortName>smMLCK</shortName>
        <ecNumber>2.7.11.18</ecNumber>
    </recommendedName>
    <alternativeName>
        <fullName>Telokin</fullName>
    </alternativeName>
    <component>
        <recommendedName>
            <fullName>Myosin light chain kinase, smooth muscle, deglutamylated form</fullName>
        </recommendedName>
    </component>
</protein>
<proteinExistence type="evidence at transcript level"/>
<accession>O02827</accession>
<comment type="function">
    <text evidence="1">Calcium/calmodulin-dependent myosin light chain kinase implicated in smooth muscle contraction via phosphorylation of myosin light chains (MLC). Also regulates actin-myosin interaction through a non-kinase activity. Phosphorylates PTK2B/PYK2 and myosin light-chains. Involved in the inflammatory response (e.g. apoptosis, vascular permeability, leukocyte diapedesis), cell motility and morphology, airway hyperreactivity and other activities relevant to asthma. Required for tonic airway smooth muscle contraction that is necessary for physiological and asthmatic airway resistance. Necessary for gastrointestinal motility. Implicated in the regulation of endothelial as well as vascular permeability, probably via the regulation of cytoskeletal rearrangements. In the nervous system it has been shown to control the growth initiation of astrocytic processes in culture and to participate in transmitter release at synapses formed between cultured sympathetic ganglion cells. Critical participant in signaling sequences that result in fibroblast apoptosis. Plays a role in the regulation of epithelial cell survival. Required for epithelial wound healing, especially during actomyosin ring contraction during purse-string wound closure. Mediates RhoA-dependent membrane blebbing. Triggers TRPC5 channel activity in a calcium-dependent signaling, by inducing its subcellular localization at the plasma membrane. Promotes cell migration (including tumor cells) and tumor metastasis. PTK2B/PYK2 activation by phosphorylation mediates ITGB2 activation and is thus essential to trigger neutrophil transmigration during acute lung injury (ALI). May regulate optic nerve head astrocyte migration. Probably involved in mitotic cytoskeletal regulation. Regulates tight junction probably by modulating ZO-1 exchange in the perijunctional actomyosin ring. Mediates burn-induced microvascular barrier injury; triggers endothelial contraction in the development of microvascular hyperpermeability by phosphorylating MLC. Essential for intestinal barrier dysfunction. Mediates Giardia spp.-mediated reduced epithelial barrier function during giardiasis intestinal infection via reorganization of cytoskeletal F-actin and tight junctional ZO-1. Necessary for hypotonicity-induced Ca(2+) entry and subsequent activation of volume-sensitive organic osmolyte/anion channels (VSOAC) in cervical cancer cells (By similarity).</text>
</comment>
<comment type="catalytic activity">
    <reaction>
        <text>L-seryl-[myosin light chain] + ATP = O-phospho-L-seryl-[myosin light chain] + ADP + H(+)</text>
        <dbReference type="Rhea" id="RHEA:22004"/>
        <dbReference type="Rhea" id="RHEA-COMP:13684"/>
        <dbReference type="Rhea" id="RHEA-COMP:13685"/>
        <dbReference type="ChEBI" id="CHEBI:15378"/>
        <dbReference type="ChEBI" id="CHEBI:29999"/>
        <dbReference type="ChEBI" id="CHEBI:30616"/>
        <dbReference type="ChEBI" id="CHEBI:83421"/>
        <dbReference type="ChEBI" id="CHEBI:456216"/>
        <dbReference type="EC" id="2.7.11.18"/>
    </reaction>
</comment>
<comment type="catalytic activity">
    <reaction>
        <text>L-threonyl-[myosin light chain] + ATP = O-phospho-L-threonyl-[myosin light chain] + ADP + H(+)</text>
        <dbReference type="Rhea" id="RHEA:53900"/>
        <dbReference type="Rhea" id="RHEA-COMP:13686"/>
        <dbReference type="Rhea" id="RHEA-COMP:13687"/>
        <dbReference type="ChEBI" id="CHEBI:15378"/>
        <dbReference type="ChEBI" id="CHEBI:30013"/>
        <dbReference type="ChEBI" id="CHEBI:30616"/>
        <dbReference type="ChEBI" id="CHEBI:61977"/>
        <dbReference type="ChEBI" id="CHEBI:456216"/>
        <dbReference type="EC" id="2.7.11.18"/>
    </reaction>
</comment>
<comment type="cofactor">
    <cofactor evidence="1">
        <name>Mg(2+)</name>
        <dbReference type="ChEBI" id="CHEBI:18420"/>
    </cofactor>
</comment>
<comment type="cofactor">
    <cofactor evidence="1">
        <name>Ca(2+)</name>
        <dbReference type="ChEBI" id="CHEBI:29108"/>
    </cofactor>
</comment>
<comment type="subunit">
    <text evidence="1">All isoforms including Telokin bind calmodulin. Interacts with SVIL (By similarity). Interacts with CTTN; this interaction is reduced during thrombin-induced endothelial cell (EC) contraction but is promoted by the barrier-protective agonist sphingosine 1-phosphate (S1P) within lamellipodia. A complex made of ABL1, CTTN and MYLK regulates cortical actin-based cytoskeletal rearrangement critical to sphingosine 1-phosphate (S1P)-mediated endothelial cell (EC) barrier enhancement. Binds to NAA10/ARD1 and PTK2B/PYK2 (By similarity).</text>
</comment>
<comment type="subcellular location">
    <subcellularLocation>
        <location evidence="2">Cytoplasm</location>
    </subcellularLocation>
    <subcellularLocation>
        <location evidence="2">Cell projection</location>
        <location evidence="2">Lamellipodium</location>
    </subcellularLocation>
    <subcellularLocation>
        <location evidence="2">Cleavage furrow</location>
    </subcellularLocation>
    <subcellularLocation>
        <location evidence="2">Cytoplasm</location>
        <location evidence="2">Cytoskeleton</location>
        <location evidence="2">Stress fiber</location>
    </subcellularLocation>
    <text evidence="2">Localized to stress fibers during interphase and to the cleavage furrow during mitosis.</text>
</comment>
<comment type="alternative products">
    <event type="alternative promoter"/>
    <isoform>
        <id>O02827-1</id>
        <name>1</name>
        <name>Smooth-muscle</name>
        <sequence type="displayed"/>
    </isoform>
    <isoform>
        <id>O02827-2</id>
        <name>2</name>
        <name>Telokin</name>
        <sequence type="described" ref="VSP_018850"/>
    </isoform>
</comment>
<comment type="PTM">
    <text evidence="1">The C-terminus is deglutamylated by AGTPBP1/CCP1, AGBL1/CCP4 and AGBL4/CCP6, leading to the formation of Myosin light chain kinase, smooth muscle, deglutamylated form. The consequences of C-terminal deglutamylation are unknown (By similarity).</text>
</comment>
<comment type="PTM">
    <text evidence="1">Can probably be down-regulated by phosphorylation. Tyrosine phosphorylation by ABL1 increases kinase activity, reverses MLCK-mediated inhibition of Arp2/3-mediated actin polymerization, and enhances CTTN-binding. Phosphorylation by SRC promotes CTTN binding (By similarity).</text>
</comment>
<comment type="miscellaneous">
    <molecule>Isoform 2</molecule>
    <text evidence="8">Has no catalytic activity.</text>
</comment>
<comment type="similarity">
    <text evidence="8">Belongs to the protein kinase superfamily. CAMK Ser/Thr protein kinase family.</text>
</comment>
<evidence type="ECO:0000250" key="1"/>
<evidence type="ECO:0000250" key="2">
    <source>
        <dbReference type="UniProtKB" id="Q15746"/>
    </source>
</evidence>
<evidence type="ECO:0000250" key="3">
    <source>
        <dbReference type="UniProtKB" id="Q6PDN3"/>
    </source>
</evidence>
<evidence type="ECO:0000255" key="4">
    <source>
        <dbReference type="PROSITE-ProRule" id="PRU00114"/>
    </source>
</evidence>
<evidence type="ECO:0000255" key="5">
    <source>
        <dbReference type="PROSITE-ProRule" id="PRU00159"/>
    </source>
</evidence>
<evidence type="ECO:0000255" key="6">
    <source>
        <dbReference type="PROSITE-ProRule" id="PRU10027"/>
    </source>
</evidence>
<evidence type="ECO:0000256" key="7">
    <source>
        <dbReference type="SAM" id="MobiDB-lite"/>
    </source>
</evidence>
<evidence type="ECO:0000305" key="8"/>
<sequence length="438" mass="49507">FRLVEKKTGKVWAGKFFKAYSAKEKENIRQEISIMNCLHHPKLVQCVDAFEEKANIVMVLEIVSGGELFERIIDEDFELTERECIKYMKQISEGVEYIHKQGIVHLDLKPENIMCVNKTGTRIKLIDFGLARRLENAGSLKVLFGTPEFVAPEVINYEPIGYATDMWSIGVICYILVSGLSPFMGDNDNETLANVTSATWDFDDEAFDEISDDAKDFISNLLKKDIKNRLNCTQCLQHPWLXXXTKNMEAKKLSKHRMKKYMARRKWQKTGNAVRAIGRLSSMAMISGLSGRKSSTGSPTSPLNAEKLESEEDVSQAFLEAVAEEKPHVKPYFSKTIRDLEVVEGSAARFDCKIEGYPDPEVVWFKDDQSIRESRHFQIDYQEDGNCSLIISDVCGDDDAKYTCKAVNSLGEATCTAELIVETMEEGEGEGGEEEEEE</sequence>
<dbReference type="EC" id="2.7.11.18"/>
<dbReference type="EMBL" id="S80867">
    <property type="protein sequence ID" value="AAB50715.2"/>
    <property type="molecule type" value="mRNA"/>
</dbReference>
<dbReference type="STRING" id="9940.ENSOARP00000021691"/>
<dbReference type="PaxDb" id="9940-ENSOARP00000021691"/>
<dbReference type="eggNOG" id="KOG0613">
    <property type="taxonomic scope" value="Eukaryota"/>
</dbReference>
<dbReference type="OrthoDB" id="10260894at2759"/>
<dbReference type="BRENDA" id="2.7.11.18">
    <property type="organism ID" value="2668"/>
</dbReference>
<dbReference type="Proteomes" id="UP000002356">
    <property type="component" value="Unplaced"/>
</dbReference>
<dbReference type="GO" id="GO:0032154">
    <property type="term" value="C:cleavage furrow"/>
    <property type="evidence" value="ECO:0007669"/>
    <property type="project" value="UniProtKB-SubCell"/>
</dbReference>
<dbReference type="GO" id="GO:0005737">
    <property type="term" value="C:cytoplasm"/>
    <property type="evidence" value="ECO:0007669"/>
    <property type="project" value="UniProtKB-SubCell"/>
</dbReference>
<dbReference type="GO" id="GO:0030027">
    <property type="term" value="C:lamellipodium"/>
    <property type="evidence" value="ECO:0007669"/>
    <property type="project" value="UniProtKB-SubCell"/>
</dbReference>
<dbReference type="GO" id="GO:0001725">
    <property type="term" value="C:stress fiber"/>
    <property type="evidence" value="ECO:0007669"/>
    <property type="project" value="UniProtKB-SubCell"/>
</dbReference>
<dbReference type="GO" id="GO:0003779">
    <property type="term" value="F:actin binding"/>
    <property type="evidence" value="ECO:0007669"/>
    <property type="project" value="UniProtKB-KW"/>
</dbReference>
<dbReference type="GO" id="GO:0005524">
    <property type="term" value="F:ATP binding"/>
    <property type="evidence" value="ECO:0007669"/>
    <property type="project" value="UniProtKB-KW"/>
</dbReference>
<dbReference type="GO" id="GO:0005516">
    <property type="term" value="F:calmodulin binding"/>
    <property type="evidence" value="ECO:0007669"/>
    <property type="project" value="UniProtKB-KW"/>
</dbReference>
<dbReference type="GO" id="GO:0046872">
    <property type="term" value="F:metal ion binding"/>
    <property type="evidence" value="ECO:0007669"/>
    <property type="project" value="UniProtKB-KW"/>
</dbReference>
<dbReference type="GO" id="GO:0004687">
    <property type="term" value="F:myosin light chain kinase activity"/>
    <property type="evidence" value="ECO:0007669"/>
    <property type="project" value="UniProtKB-EC"/>
</dbReference>
<dbReference type="GO" id="GO:0014820">
    <property type="term" value="P:tonic smooth muscle contraction"/>
    <property type="evidence" value="ECO:0007669"/>
    <property type="project" value="TreeGrafter"/>
</dbReference>
<dbReference type="CDD" id="cd20973">
    <property type="entry name" value="IgI_telokin-like"/>
    <property type="match status" value="1"/>
</dbReference>
<dbReference type="FunFam" id="1.10.510.10:FF:000175">
    <property type="entry name" value="Myosin light chain kinase, smooth muscle"/>
    <property type="match status" value="1"/>
</dbReference>
<dbReference type="FunFam" id="2.60.40.10:FF:000080">
    <property type="entry name" value="Myosin light chain kinase, smooth muscle"/>
    <property type="match status" value="1"/>
</dbReference>
<dbReference type="Gene3D" id="2.60.40.10">
    <property type="entry name" value="Immunoglobulins"/>
    <property type="match status" value="1"/>
</dbReference>
<dbReference type="Gene3D" id="3.30.200.20">
    <property type="entry name" value="Phosphorylase Kinase, domain 1"/>
    <property type="match status" value="1"/>
</dbReference>
<dbReference type="Gene3D" id="1.10.510.10">
    <property type="entry name" value="Transferase(Phosphotransferase) domain 1"/>
    <property type="match status" value="1"/>
</dbReference>
<dbReference type="InterPro" id="IPR007110">
    <property type="entry name" value="Ig-like_dom"/>
</dbReference>
<dbReference type="InterPro" id="IPR036179">
    <property type="entry name" value="Ig-like_dom_sf"/>
</dbReference>
<dbReference type="InterPro" id="IPR013783">
    <property type="entry name" value="Ig-like_fold"/>
</dbReference>
<dbReference type="InterPro" id="IPR013098">
    <property type="entry name" value="Ig_I-set"/>
</dbReference>
<dbReference type="InterPro" id="IPR003599">
    <property type="entry name" value="Ig_sub"/>
</dbReference>
<dbReference type="InterPro" id="IPR003598">
    <property type="entry name" value="Ig_sub2"/>
</dbReference>
<dbReference type="InterPro" id="IPR011009">
    <property type="entry name" value="Kinase-like_dom_sf"/>
</dbReference>
<dbReference type="InterPro" id="IPR000719">
    <property type="entry name" value="Prot_kinase_dom"/>
</dbReference>
<dbReference type="InterPro" id="IPR008271">
    <property type="entry name" value="Ser/Thr_kinase_AS"/>
</dbReference>
<dbReference type="PANTHER" id="PTHR47633">
    <property type="entry name" value="IMMUNOGLOBULIN"/>
    <property type="match status" value="1"/>
</dbReference>
<dbReference type="PANTHER" id="PTHR47633:SF1">
    <property type="entry name" value="MYOSIN LIGHT CHAIN KINASE, SMOOTH MUSCLE"/>
    <property type="match status" value="1"/>
</dbReference>
<dbReference type="Pfam" id="PF07679">
    <property type="entry name" value="I-set"/>
    <property type="match status" value="1"/>
</dbReference>
<dbReference type="Pfam" id="PF00069">
    <property type="entry name" value="Pkinase"/>
    <property type="match status" value="1"/>
</dbReference>
<dbReference type="SMART" id="SM00409">
    <property type="entry name" value="IG"/>
    <property type="match status" value="1"/>
</dbReference>
<dbReference type="SMART" id="SM00408">
    <property type="entry name" value="IGc2"/>
    <property type="match status" value="1"/>
</dbReference>
<dbReference type="SMART" id="SM00220">
    <property type="entry name" value="S_TKc"/>
    <property type="match status" value="1"/>
</dbReference>
<dbReference type="SUPFAM" id="SSF48726">
    <property type="entry name" value="Immunoglobulin"/>
    <property type="match status" value="1"/>
</dbReference>
<dbReference type="SUPFAM" id="SSF56112">
    <property type="entry name" value="Protein kinase-like (PK-like)"/>
    <property type="match status" value="1"/>
</dbReference>
<dbReference type="PROSITE" id="PS50835">
    <property type="entry name" value="IG_LIKE"/>
    <property type="match status" value="1"/>
</dbReference>
<dbReference type="PROSITE" id="PS50011">
    <property type="entry name" value="PROTEIN_KINASE_DOM"/>
    <property type="match status" value="1"/>
</dbReference>
<dbReference type="PROSITE" id="PS00108">
    <property type="entry name" value="PROTEIN_KINASE_ST"/>
    <property type="match status" value="1"/>
</dbReference>
<feature type="chain" id="PRO_0000024359" description="Myosin light chain kinase, smooth muscle">
    <location>
        <begin position="1" status="less than"/>
        <end position="438"/>
    </location>
</feature>
<feature type="chain" id="PRO_0000403734" description="Myosin light chain kinase, smooth muscle, deglutamylated form" evidence="1">
    <location>
        <begin position="1" status="less than"/>
        <end position="433"/>
    </location>
</feature>
<feature type="domain" description="Protein kinase" evidence="5">
    <location>
        <begin position="1" status="less than"/>
        <end position="241"/>
    </location>
</feature>
<feature type="domain" description="Ig-like C2-type">
    <location>
        <begin position="331"/>
        <end position="420"/>
    </location>
</feature>
<feature type="region of interest" description="Calmodulin-binding">
    <location>
        <begin position="233"/>
        <end position="296"/>
    </location>
</feature>
<feature type="region of interest" description="Telokin">
    <location>
        <begin position="283"/>
        <end position="438"/>
    </location>
</feature>
<feature type="region of interest" description="Disordered" evidence="7">
    <location>
        <begin position="289"/>
        <end position="309"/>
    </location>
</feature>
<feature type="compositionally biased region" description="Polar residues" evidence="7">
    <location>
        <begin position="292"/>
        <end position="303"/>
    </location>
</feature>
<feature type="active site" description="Proton acceptor" evidence="5 6">
    <location>
        <position position="107"/>
    </location>
</feature>
<feature type="binding site" evidence="5">
    <location>
        <position position="15"/>
    </location>
    <ligand>
        <name>ATP</name>
        <dbReference type="ChEBI" id="CHEBI:30616"/>
    </ligand>
</feature>
<feature type="modified residue" description="Phosphotyrosine; by ABL1" evidence="2">
    <location>
        <position position="97"/>
    </location>
</feature>
<feature type="modified residue" description="Phosphotyrosine; by ABL1" evidence="2">
    <location>
        <position position="157"/>
    </location>
</feature>
<feature type="modified residue" description="Phosphoserine" evidence="3">
    <location>
        <position position="281"/>
    </location>
</feature>
<feature type="modified residue" description="Phosphoserine" evidence="3">
    <location>
        <position position="282"/>
    </location>
</feature>
<feature type="modified residue" description="Phosphoserine" evidence="2">
    <location>
        <position position="294"/>
    </location>
</feature>
<feature type="modified residue" description="Phosphoserine" evidence="3">
    <location>
        <position position="295"/>
    </location>
</feature>
<feature type="modified residue" description="Phosphoserine" evidence="2">
    <location>
        <position position="298"/>
    </location>
</feature>
<feature type="modified residue" description="Phosphothreonine" evidence="3">
    <location>
        <position position="300"/>
    </location>
</feature>
<feature type="modified residue" description="Phosphoserine" evidence="2">
    <location>
        <position position="301"/>
    </location>
</feature>
<feature type="disulfide bond" evidence="4">
    <location>
        <begin position="352"/>
        <end position="404"/>
    </location>
</feature>
<feature type="splice variant" id="VSP_018850" description="In isoform 2." evidence="8">
    <location>
        <begin position="1" status="less than"/>
        <end position="282"/>
    </location>
</feature>
<feature type="non-terminal residue">
    <location>
        <position position="1"/>
    </location>
</feature>
<reference key="1">
    <citation type="journal article" date="1995" name="Mol. Cell. Biochem.">
        <title>Phosphorylation and partial sequence of pregnant sheep myometrium myosin light chain kinase.</title>
        <authorList>
            <person name="Pato M.D."/>
            <person name="Kerc E."/>
            <person name="Lye S.J."/>
        </authorList>
    </citation>
    <scope>PARTIAL NUCLEOTIDE SEQUENCE [MRNA]</scope>
</reference>
<keyword id="KW-0009">Actin-binding</keyword>
<keyword id="KW-0877">Alternative promoter usage</keyword>
<keyword id="KW-0067">ATP-binding</keyword>
<keyword id="KW-0106">Calcium</keyword>
<keyword id="KW-0112">Calmodulin-binding</keyword>
<keyword id="KW-0966">Cell projection</keyword>
<keyword id="KW-0963">Cytoplasm</keyword>
<keyword id="KW-0206">Cytoskeleton</keyword>
<keyword id="KW-1015">Disulfide bond</keyword>
<keyword id="KW-0393">Immunoglobulin domain</keyword>
<keyword id="KW-0418">Kinase</keyword>
<keyword id="KW-0460">Magnesium</keyword>
<keyword id="KW-0479">Metal-binding</keyword>
<keyword id="KW-0547">Nucleotide-binding</keyword>
<keyword id="KW-0597">Phosphoprotein</keyword>
<keyword id="KW-1185">Reference proteome</keyword>
<keyword id="KW-0723">Serine/threonine-protein kinase</keyword>
<keyword id="KW-0808">Transferase</keyword>
<organism>
    <name type="scientific">Ovis aries</name>
    <name type="common">Sheep</name>
    <dbReference type="NCBI Taxonomy" id="9940"/>
    <lineage>
        <taxon>Eukaryota</taxon>
        <taxon>Metazoa</taxon>
        <taxon>Chordata</taxon>
        <taxon>Craniata</taxon>
        <taxon>Vertebrata</taxon>
        <taxon>Euteleostomi</taxon>
        <taxon>Mammalia</taxon>
        <taxon>Eutheria</taxon>
        <taxon>Laurasiatheria</taxon>
        <taxon>Artiodactyla</taxon>
        <taxon>Ruminantia</taxon>
        <taxon>Pecora</taxon>
        <taxon>Bovidae</taxon>
        <taxon>Caprinae</taxon>
        <taxon>Ovis</taxon>
    </lineage>
</organism>
<name>MYLK_SHEEP</name>
<gene>
    <name type="primary">MYLK</name>
</gene>